<protein>
    <recommendedName>
        <fullName>pH-response transcription factor pacC/RIM101</fullName>
    </recommendedName>
</protein>
<reference key="1">
    <citation type="journal article" date="2005" name="Nature">
        <title>The genome sequence of the rice blast fungus Magnaporthe grisea.</title>
        <authorList>
            <person name="Dean R.A."/>
            <person name="Talbot N.J."/>
            <person name="Ebbole D.J."/>
            <person name="Farman M.L."/>
            <person name="Mitchell T.K."/>
            <person name="Orbach M.J."/>
            <person name="Thon M.R."/>
            <person name="Kulkarni R."/>
            <person name="Xu J.-R."/>
            <person name="Pan H."/>
            <person name="Read N.D."/>
            <person name="Lee Y.-H."/>
            <person name="Carbone I."/>
            <person name="Brown D."/>
            <person name="Oh Y.Y."/>
            <person name="Donofrio N."/>
            <person name="Jeong J.S."/>
            <person name="Soanes D.M."/>
            <person name="Djonovic S."/>
            <person name="Kolomiets E."/>
            <person name="Rehmeyer C."/>
            <person name="Li W."/>
            <person name="Harding M."/>
            <person name="Kim S."/>
            <person name="Lebrun M.-H."/>
            <person name="Bohnert H."/>
            <person name="Coughlan S."/>
            <person name="Butler J."/>
            <person name="Calvo S.E."/>
            <person name="Ma L.-J."/>
            <person name="Nicol R."/>
            <person name="Purcell S."/>
            <person name="Nusbaum C."/>
            <person name="Galagan J.E."/>
            <person name="Birren B.W."/>
        </authorList>
    </citation>
    <scope>NUCLEOTIDE SEQUENCE [LARGE SCALE GENOMIC DNA]</scope>
    <source>
        <strain>70-15 / ATCC MYA-4617 / FGSC 8958</strain>
    </source>
</reference>
<proteinExistence type="inferred from homology"/>
<comment type="function">
    <text evidence="1">Transcription factor that mediates regulation of both acid- and alkaline-expressed genes in response to ambient pH. At alkaline ambient pH, activates transcription of alkaline-expressed genes (including RIM101 itself) and represses transcription of acid-expressed genes (By similarity).</text>
</comment>
<comment type="subunit">
    <text evidence="1">Binds to DNA. Interacts with RIM20, which binds to the two YPX[LI] motifs and is required for proteolytic processing (By similarity).</text>
</comment>
<comment type="subcellular location">
    <subcellularLocation>
        <location evidence="1">Cytoplasm</location>
    </subcellularLocation>
    <subcellularLocation>
        <location evidence="1">Nucleus</location>
    </subcellularLocation>
</comment>
<comment type="PTM">
    <text evidence="1">Activated by C-terminal proteolytic cleavage by signaling protease (probably palB/RIM13) at neutral to alkaline ambient pH.</text>
</comment>
<comment type="similarity">
    <text evidence="4">Belongs to the pacC/RIM101 family.</text>
</comment>
<feature type="chain" id="PRO_0000046837" description="pH-response transcription factor pacC/RIM101">
    <location>
        <begin position="1"/>
        <end position="559"/>
    </location>
</feature>
<feature type="zinc finger region" description="C2H2-type 1" evidence="2">
    <location>
        <begin position="52"/>
        <end position="77"/>
    </location>
</feature>
<feature type="zinc finger region" description="C2H2-type 2" evidence="2">
    <location>
        <begin position="88"/>
        <end position="112"/>
    </location>
</feature>
<feature type="zinc finger region" description="C2H2-type 3" evidence="2">
    <location>
        <begin position="118"/>
        <end position="140"/>
    </location>
</feature>
<feature type="region of interest" description="Disordered" evidence="3">
    <location>
        <begin position="1"/>
        <end position="47"/>
    </location>
</feature>
<feature type="region of interest" description="Disordered" evidence="3">
    <location>
        <begin position="181"/>
        <end position="202"/>
    </location>
</feature>
<feature type="region of interest" description="Disordered" evidence="3">
    <location>
        <begin position="339"/>
        <end position="430"/>
    </location>
</feature>
<feature type="region of interest" description="Disordered" evidence="3">
    <location>
        <begin position="459"/>
        <end position="505"/>
    </location>
</feature>
<feature type="region of interest" description="Disordered" evidence="3">
    <location>
        <begin position="527"/>
        <end position="559"/>
    </location>
</feature>
<feature type="short sequence motif" description="YPX[LI] motif 1">
    <location>
        <begin position="430"/>
        <end position="433"/>
    </location>
</feature>
<feature type="short sequence motif" description="YPX[LI] motif 2">
    <location>
        <begin position="553"/>
        <end position="556"/>
    </location>
</feature>
<feature type="compositionally biased region" description="Polar residues" evidence="3">
    <location>
        <begin position="375"/>
        <end position="391"/>
    </location>
</feature>
<feature type="compositionally biased region" description="Low complexity" evidence="3">
    <location>
        <begin position="407"/>
        <end position="427"/>
    </location>
</feature>
<feature type="compositionally biased region" description="Polar residues" evidence="3">
    <location>
        <begin position="487"/>
        <end position="496"/>
    </location>
</feature>
<feature type="compositionally biased region" description="Basic and acidic residues" evidence="3">
    <location>
        <begin position="542"/>
        <end position="551"/>
    </location>
</feature>
<name>PACC_PYRO7</name>
<dbReference type="EMBL" id="CM001232">
    <property type="protein sequence ID" value="EHA53981.1"/>
    <property type="molecule type" value="Genomic_DNA"/>
</dbReference>
<dbReference type="RefSeq" id="XP_003713788.1">
    <property type="nucleotide sequence ID" value="XM_003713740.1"/>
</dbReference>
<dbReference type="STRING" id="242507.Q52B93"/>
<dbReference type="EnsemblFungi" id="MGG_10150T0">
    <property type="protein sequence ID" value="MGG_10150T0"/>
    <property type="gene ID" value="MGG_10150"/>
</dbReference>
<dbReference type="GeneID" id="2681777"/>
<dbReference type="KEGG" id="mgr:MGG_10150"/>
<dbReference type="VEuPathDB" id="FungiDB:MGG_10150"/>
<dbReference type="eggNOG" id="KOG1721">
    <property type="taxonomic scope" value="Eukaryota"/>
</dbReference>
<dbReference type="HOGENOM" id="CLU_012842_1_1_1"/>
<dbReference type="InParanoid" id="Q52B93"/>
<dbReference type="OMA" id="QWGNCRT"/>
<dbReference type="OrthoDB" id="6155966at2759"/>
<dbReference type="PHI-base" id="PHI:3701"/>
<dbReference type="Proteomes" id="UP000009058">
    <property type="component" value="Chromosome 2"/>
</dbReference>
<dbReference type="GO" id="GO:0005737">
    <property type="term" value="C:cytoplasm"/>
    <property type="evidence" value="ECO:0007669"/>
    <property type="project" value="UniProtKB-SubCell"/>
</dbReference>
<dbReference type="GO" id="GO:0005634">
    <property type="term" value="C:nucleus"/>
    <property type="evidence" value="ECO:0007669"/>
    <property type="project" value="UniProtKB-SubCell"/>
</dbReference>
<dbReference type="GO" id="GO:0003677">
    <property type="term" value="F:DNA binding"/>
    <property type="evidence" value="ECO:0007669"/>
    <property type="project" value="UniProtKB-KW"/>
</dbReference>
<dbReference type="GO" id="GO:0008270">
    <property type="term" value="F:zinc ion binding"/>
    <property type="evidence" value="ECO:0007669"/>
    <property type="project" value="UniProtKB-KW"/>
</dbReference>
<dbReference type="GO" id="GO:0045944">
    <property type="term" value="P:positive regulation of transcription by RNA polymerase II"/>
    <property type="evidence" value="ECO:0007669"/>
    <property type="project" value="TreeGrafter"/>
</dbReference>
<dbReference type="FunFam" id="3.30.160.60:FF:000458">
    <property type="entry name" value="pH-response transcription factor pacC/RIM101"/>
    <property type="match status" value="1"/>
</dbReference>
<dbReference type="FunFam" id="3.30.160.60:FF:001875">
    <property type="entry name" value="pH-response transcription factor pacC/RIM101"/>
    <property type="match status" value="1"/>
</dbReference>
<dbReference type="Gene3D" id="3.30.160.60">
    <property type="entry name" value="Classic Zinc Finger"/>
    <property type="match status" value="2"/>
</dbReference>
<dbReference type="InterPro" id="IPR050806">
    <property type="entry name" value="pacC/RIM101"/>
</dbReference>
<dbReference type="InterPro" id="IPR036236">
    <property type="entry name" value="Znf_C2H2_sf"/>
</dbReference>
<dbReference type="InterPro" id="IPR013087">
    <property type="entry name" value="Znf_C2H2_type"/>
</dbReference>
<dbReference type="PANTHER" id="PTHR47257">
    <property type="entry name" value="PH-RESPONSE TRANSCRIPTION FACTOR PACC/RIM101"/>
    <property type="match status" value="1"/>
</dbReference>
<dbReference type="PANTHER" id="PTHR47257:SF1">
    <property type="entry name" value="PH-RESPONSE TRANSCRIPTION FACTOR PACC_RIM101"/>
    <property type="match status" value="1"/>
</dbReference>
<dbReference type="Pfam" id="PF00096">
    <property type="entry name" value="zf-C2H2"/>
    <property type="match status" value="1"/>
</dbReference>
<dbReference type="SMART" id="SM00355">
    <property type="entry name" value="ZnF_C2H2"/>
    <property type="match status" value="3"/>
</dbReference>
<dbReference type="SUPFAM" id="SSF57667">
    <property type="entry name" value="beta-beta-alpha zinc fingers"/>
    <property type="match status" value="2"/>
</dbReference>
<dbReference type="PROSITE" id="PS00028">
    <property type="entry name" value="ZINC_FINGER_C2H2_1"/>
    <property type="match status" value="2"/>
</dbReference>
<dbReference type="PROSITE" id="PS50157">
    <property type="entry name" value="ZINC_FINGER_C2H2_2"/>
    <property type="match status" value="3"/>
</dbReference>
<accession>Q52B93</accession>
<accession>A4RMA1</accession>
<accession>G4MUA0</accession>
<gene>
    <name type="primary">RIM101</name>
    <name type="ORF">MGG_10150</name>
</gene>
<sequence>MSAQQPSAQPAQQAPATTQAPTTESSSSNSNGNTPAPSTSTTATSQSSDDSLICRWNQCSERFPSAEALYDHICERHVGRKSTNNLNLTCHWNSCRTTTVKRDHITSHIRVHVPLKPHKCDFCGKSFKRPQDLKKHVKTHADDSVLARSPQDPNANLGPGAYRGHASKAPSSYYDHNGHVRTNSSAFGQPHHHQNGHASYYSHPPAPYGGGMYYQPPHMGPRGDIFGHPGAGAYDSRKRGYDDLNDFFGNLKRRQFDASSYAHVGRSLVPLHGALSVHTGGVGGMAAEYMAAPPPSSSVSMGSAGPLAQHYYLPPMPSLRTKNDLEQIDQILEHMQSTVYENSGSSPGAHYGSGSGYDMRHQSPVGIRPPMSDHYGQQQHSPMTAVSSSHGGSPAVTPPSSNLSYTSGHSPGASSAALSPSSRQGSSISYPTLPAAAGSSATAQLGSNFSSVERRLSGGILQSASRDRERESSYDGASTPRGPESVGSPSACSDASGSEPESYDSWVQNMRTIEALRDLVRERLRRGQYDDVEESVNLPPIKTERPDEEKPLYPSLRMS</sequence>
<evidence type="ECO:0000250" key="1"/>
<evidence type="ECO:0000255" key="2">
    <source>
        <dbReference type="PROSITE-ProRule" id="PRU00042"/>
    </source>
</evidence>
<evidence type="ECO:0000256" key="3">
    <source>
        <dbReference type="SAM" id="MobiDB-lite"/>
    </source>
</evidence>
<evidence type="ECO:0000305" key="4"/>
<organism>
    <name type="scientific">Pyricularia oryzae (strain 70-15 / ATCC MYA-4617 / FGSC 8958)</name>
    <name type="common">Rice blast fungus</name>
    <name type="synonym">Magnaporthe oryzae</name>
    <dbReference type="NCBI Taxonomy" id="242507"/>
    <lineage>
        <taxon>Eukaryota</taxon>
        <taxon>Fungi</taxon>
        <taxon>Dikarya</taxon>
        <taxon>Ascomycota</taxon>
        <taxon>Pezizomycotina</taxon>
        <taxon>Sordariomycetes</taxon>
        <taxon>Sordariomycetidae</taxon>
        <taxon>Magnaporthales</taxon>
        <taxon>Pyriculariaceae</taxon>
        <taxon>Pyricularia</taxon>
    </lineage>
</organism>
<keyword id="KW-0010">Activator</keyword>
<keyword id="KW-0963">Cytoplasm</keyword>
<keyword id="KW-0238">DNA-binding</keyword>
<keyword id="KW-0479">Metal-binding</keyword>
<keyword id="KW-0539">Nucleus</keyword>
<keyword id="KW-1185">Reference proteome</keyword>
<keyword id="KW-0677">Repeat</keyword>
<keyword id="KW-0678">Repressor</keyword>
<keyword id="KW-0804">Transcription</keyword>
<keyword id="KW-0805">Transcription regulation</keyword>
<keyword id="KW-0862">Zinc</keyword>
<keyword id="KW-0863">Zinc-finger</keyword>